<gene>
    <name evidence="1" type="primary">rsmG</name>
    <name type="ordered locus">RP057</name>
</gene>
<proteinExistence type="inferred from homology"/>
<accession>Q9ZE89</accession>
<dbReference type="EC" id="2.1.1.170" evidence="1"/>
<dbReference type="EMBL" id="AJ235270">
    <property type="protein sequence ID" value="CAA14528.1"/>
    <property type="molecule type" value="Genomic_DNA"/>
</dbReference>
<dbReference type="PIR" id="A71714">
    <property type="entry name" value="A71714"/>
</dbReference>
<dbReference type="RefSeq" id="NP_220451.1">
    <property type="nucleotide sequence ID" value="NC_000963.1"/>
</dbReference>
<dbReference type="RefSeq" id="WP_004596593.1">
    <property type="nucleotide sequence ID" value="NC_000963.1"/>
</dbReference>
<dbReference type="SMR" id="Q9ZE89"/>
<dbReference type="STRING" id="272947.gene:17555140"/>
<dbReference type="EnsemblBacteria" id="CAA14528">
    <property type="protein sequence ID" value="CAA14528"/>
    <property type="gene ID" value="CAA14528"/>
</dbReference>
<dbReference type="KEGG" id="rpr:RP057"/>
<dbReference type="PATRIC" id="fig|272947.5.peg.58"/>
<dbReference type="eggNOG" id="COG0357">
    <property type="taxonomic scope" value="Bacteria"/>
</dbReference>
<dbReference type="HOGENOM" id="CLU_065341_1_1_5"/>
<dbReference type="OrthoDB" id="9808773at2"/>
<dbReference type="Proteomes" id="UP000002480">
    <property type="component" value="Chromosome"/>
</dbReference>
<dbReference type="GO" id="GO:0005829">
    <property type="term" value="C:cytosol"/>
    <property type="evidence" value="ECO:0007669"/>
    <property type="project" value="TreeGrafter"/>
</dbReference>
<dbReference type="GO" id="GO:0070043">
    <property type="term" value="F:rRNA (guanine-N7-)-methyltransferase activity"/>
    <property type="evidence" value="ECO:0007669"/>
    <property type="project" value="UniProtKB-UniRule"/>
</dbReference>
<dbReference type="Gene3D" id="3.40.50.150">
    <property type="entry name" value="Vaccinia Virus protein VP39"/>
    <property type="match status" value="1"/>
</dbReference>
<dbReference type="HAMAP" id="MF_00074">
    <property type="entry name" value="16SrRNA_methyltr_G"/>
    <property type="match status" value="1"/>
</dbReference>
<dbReference type="InterPro" id="IPR003682">
    <property type="entry name" value="rRNA_ssu_MeTfrase_G"/>
</dbReference>
<dbReference type="InterPro" id="IPR029063">
    <property type="entry name" value="SAM-dependent_MTases_sf"/>
</dbReference>
<dbReference type="NCBIfam" id="TIGR00138">
    <property type="entry name" value="rsmG_gidB"/>
    <property type="match status" value="1"/>
</dbReference>
<dbReference type="PANTHER" id="PTHR31760">
    <property type="entry name" value="S-ADENOSYL-L-METHIONINE-DEPENDENT METHYLTRANSFERASES SUPERFAMILY PROTEIN"/>
    <property type="match status" value="1"/>
</dbReference>
<dbReference type="PANTHER" id="PTHR31760:SF0">
    <property type="entry name" value="S-ADENOSYL-L-METHIONINE-DEPENDENT METHYLTRANSFERASES SUPERFAMILY PROTEIN"/>
    <property type="match status" value="1"/>
</dbReference>
<dbReference type="Pfam" id="PF02527">
    <property type="entry name" value="GidB"/>
    <property type="match status" value="1"/>
</dbReference>
<dbReference type="PIRSF" id="PIRSF003078">
    <property type="entry name" value="GidB"/>
    <property type="match status" value="1"/>
</dbReference>
<dbReference type="SUPFAM" id="SSF53335">
    <property type="entry name" value="S-adenosyl-L-methionine-dependent methyltransferases"/>
    <property type="match status" value="1"/>
</dbReference>
<sequence>MKVQSEIIEKLEIFQNLIKKWNKSINLISDNTIPNFWQRHILDSLQLMQYISNKEIHLIDIGSGAGFPGIVLSIAGVTKVSLIEADLRKCIFLAKASKISNNSIQIINQRIEKIEIDCSILTCRAFSNLNTIFNYTQNISVREKFLLLKGKSYLTEIVEAKERWSFDYLIHQSITCGSGKILEINNLTKII</sequence>
<organism>
    <name type="scientific">Rickettsia prowazekii (strain Madrid E)</name>
    <dbReference type="NCBI Taxonomy" id="272947"/>
    <lineage>
        <taxon>Bacteria</taxon>
        <taxon>Pseudomonadati</taxon>
        <taxon>Pseudomonadota</taxon>
        <taxon>Alphaproteobacteria</taxon>
        <taxon>Rickettsiales</taxon>
        <taxon>Rickettsiaceae</taxon>
        <taxon>Rickettsieae</taxon>
        <taxon>Rickettsia</taxon>
        <taxon>typhus group</taxon>
    </lineage>
</organism>
<comment type="function">
    <text evidence="1">Specifically methylates the N7 position of guanine in position 527 of 16S rRNA.</text>
</comment>
<comment type="catalytic activity">
    <reaction evidence="1">
        <text>guanosine(527) in 16S rRNA + S-adenosyl-L-methionine = N(7)-methylguanosine(527) in 16S rRNA + S-adenosyl-L-homocysteine</text>
        <dbReference type="Rhea" id="RHEA:42732"/>
        <dbReference type="Rhea" id="RHEA-COMP:10209"/>
        <dbReference type="Rhea" id="RHEA-COMP:10210"/>
        <dbReference type="ChEBI" id="CHEBI:57856"/>
        <dbReference type="ChEBI" id="CHEBI:59789"/>
        <dbReference type="ChEBI" id="CHEBI:74269"/>
        <dbReference type="ChEBI" id="CHEBI:74480"/>
        <dbReference type="EC" id="2.1.1.170"/>
    </reaction>
</comment>
<comment type="subcellular location">
    <subcellularLocation>
        <location evidence="1">Cytoplasm</location>
    </subcellularLocation>
</comment>
<comment type="similarity">
    <text evidence="1">Belongs to the methyltransferase superfamily. RNA methyltransferase RsmG family.</text>
</comment>
<keyword id="KW-0963">Cytoplasm</keyword>
<keyword id="KW-0489">Methyltransferase</keyword>
<keyword id="KW-1185">Reference proteome</keyword>
<keyword id="KW-0698">rRNA processing</keyword>
<keyword id="KW-0949">S-adenosyl-L-methionine</keyword>
<keyword id="KW-0808">Transferase</keyword>
<reference key="1">
    <citation type="journal article" date="1998" name="Nature">
        <title>The genome sequence of Rickettsia prowazekii and the origin of mitochondria.</title>
        <authorList>
            <person name="Andersson S.G.E."/>
            <person name="Zomorodipour A."/>
            <person name="Andersson J.O."/>
            <person name="Sicheritz-Ponten T."/>
            <person name="Alsmark U.C.M."/>
            <person name="Podowski R.M."/>
            <person name="Naeslund A.K."/>
            <person name="Eriksson A.-S."/>
            <person name="Winkler H.H."/>
            <person name="Kurland C.G."/>
        </authorList>
    </citation>
    <scope>NUCLEOTIDE SEQUENCE [LARGE SCALE GENOMIC DNA]</scope>
    <source>
        <strain>Madrid E</strain>
    </source>
</reference>
<feature type="chain" id="PRO_0000184319" description="Ribosomal RNA small subunit methyltransferase G">
    <location>
        <begin position="1"/>
        <end position="191"/>
    </location>
</feature>
<feature type="binding site" evidence="1">
    <location>
        <position position="62"/>
    </location>
    <ligand>
        <name>S-adenosyl-L-methionine</name>
        <dbReference type="ChEBI" id="CHEBI:59789"/>
    </ligand>
</feature>
<feature type="binding site" evidence="1">
    <location>
        <position position="67"/>
    </location>
    <ligand>
        <name>S-adenosyl-L-methionine</name>
        <dbReference type="ChEBI" id="CHEBI:59789"/>
    </ligand>
</feature>
<feature type="binding site" evidence="1">
    <location>
        <begin position="111"/>
        <end position="112"/>
    </location>
    <ligand>
        <name>S-adenosyl-L-methionine</name>
        <dbReference type="ChEBI" id="CHEBI:59789"/>
    </ligand>
</feature>
<feature type="binding site" evidence="1">
    <location>
        <position position="124"/>
    </location>
    <ligand>
        <name>S-adenosyl-L-methionine</name>
        <dbReference type="ChEBI" id="CHEBI:59789"/>
    </ligand>
</feature>
<protein>
    <recommendedName>
        <fullName evidence="1">Ribosomal RNA small subunit methyltransferase G</fullName>
        <ecNumber evidence="1">2.1.1.170</ecNumber>
    </recommendedName>
    <alternativeName>
        <fullName evidence="1">16S rRNA 7-methylguanosine methyltransferase</fullName>
        <shortName evidence="1">16S rRNA m7G methyltransferase</shortName>
    </alternativeName>
</protein>
<evidence type="ECO:0000255" key="1">
    <source>
        <dbReference type="HAMAP-Rule" id="MF_00074"/>
    </source>
</evidence>
<name>RSMG_RICPR</name>